<dbReference type="EC" id="2.1.2.1" evidence="1"/>
<dbReference type="EMBL" id="CP001635">
    <property type="protein sequence ID" value="ACS19719.1"/>
    <property type="molecule type" value="Genomic_DNA"/>
</dbReference>
<dbReference type="SMR" id="C5CPY0"/>
<dbReference type="STRING" id="543728.Vapar_3100"/>
<dbReference type="KEGG" id="vap:Vapar_3100"/>
<dbReference type="eggNOG" id="COG0112">
    <property type="taxonomic scope" value="Bacteria"/>
</dbReference>
<dbReference type="HOGENOM" id="CLU_022477_2_1_4"/>
<dbReference type="OrthoDB" id="9803846at2"/>
<dbReference type="UniPathway" id="UPA00193"/>
<dbReference type="UniPathway" id="UPA00288">
    <property type="reaction ID" value="UER01023"/>
</dbReference>
<dbReference type="GO" id="GO:0005829">
    <property type="term" value="C:cytosol"/>
    <property type="evidence" value="ECO:0007669"/>
    <property type="project" value="TreeGrafter"/>
</dbReference>
<dbReference type="GO" id="GO:0004372">
    <property type="term" value="F:glycine hydroxymethyltransferase activity"/>
    <property type="evidence" value="ECO:0007669"/>
    <property type="project" value="UniProtKB-UniRule"/>
</dbReference>
<dbReference type="GO" id="GO:0030170">
    <property type="term" value="F:pyridoxal phosphate binding"/>
    <property type="evidence" value="ECO:0007669"/>
    <property type="project" value="UniProtKB-UniRule"/>
</dbReference>
<dbReference type="GO" id="GO:0019264">
    <property type="term" value="P:glycine biosynthetic process from serine"/>
    <property type="evidence" value="ECO:0007669"/>
    <property type="project" value="UniProtKB-UniRule"/>
</dbReference>
<dbReference type="GO" id="GO:0035999">
    <property type="term" value="P:tetrahydrofolate interconversion"/>
    <property type="evidence" value="ECO:0007669"/>
    <property type="project" value="UniProtKB-UniRule"/>
</dbReference>
<dbReference type="CDD" id="cd00378">
    <property type="entry name" value="SHMT"/>
    <property type="match status" value="1"/>
</dbReference>
<dbReference type="FunFam" id="3.40.640.10:FF:000001">
    <property type="entry name" value="Serine hydroxymethyltransferase"/>
    <property type="match status" value="1"/>
</dbReference>
<dbReference type="FunFam" id="3.90.1150.10:FF:000003">
    <property type="entry name" value="Serine hydroxymethyltransferase"/>
    <property type="match status" value="1"/>
</dbReference>
<dbReference type="Gene3D" id="3.90.1150.10">
    <property type="entry name" value="Aspartate Aminotransferase, domain 1"/>
    <property type="match status" value="1"/>
</dbReference>
<dbReference type="Gene3D" id="3.40.640.10">
    <property type="entry name" value="Type I PLP-dependent aspartate aminotransferase-like (Major domain)"/>
    <property type="match status" value="1"/>
</dbReference>
<dbReference type="HAMAP" id="MF_00051">
    <property type="entry name" value="SHMT"/>
    <property type="match status" value="1"/>
</dbReference>
<dbReference type="InterPro" id="IPR015424">
    <property type="entry name" value="PyrdxlP-dep_Trfase"/>
</dbReference>
<dbReference type="InterPro" id="IPR015421">
    <property type="entry name" value="PyrdxlP-dep_Trfase_major"/>
</dbReference>
<dbReference type="InterPro" id="IPR015422">
    <property type="entry name" value="PyrdxlP-dep_Trfase_small"/>
</dbReference>
<dbReference type="InterPro" id="IPR001085">
    <property type="entry name" value="Ser_HO-MeTrfase"/>
</dbReference>
<dbReference type="InterPro" id="IPR049943">
    <property type="entry name" value="Ser_HO-MeTrfase-like"/>
</dbReference>
<dbReference type="InterPro" id="IPR019798">
    <property type="entry name" value="Ser_HO-MeTrfase_PLP_BS"/>
</dbReference>
<dbReference type="InterPro" id="IPR039429">
    <property type="entry name" value="SHMT-like_dom"/>
</dbReference>
<dbReference type="NCBIfam" id="NF000586">
    <property type="entry name" value="PRK00011.1"/>
    <property type="match status" value="1"/>
</dbReference>
<dbReference type="PANTHER" id="PTHR11680">
    <property type="entry name" value="SERINE HYDROXYMETHYLTRANSFERASE"/>
    <property type="match status" value="1"/>
</dbReference>
<dbReference type="PANTHER" id="PTHR11680:SF50">
    <property type="entry name" value="SERINE HYDROXYMETHYLTRANSFERASE"/>
    <property type="match status" value="1"/>
</dbReference>
<dbReference type="Pfam" id="PF00464">
    <property type="entry name" value="SHMT"/>
    <property type="match status" value="1"/>
</dbReference>
<dbReference type="PIRSF" id="PIRSF000412">
    <property type="entry name" value="SHMT"/>
    <property type="match status" value="1"/>
</dbReference>
<dbReference type="SUPFAM" id="SSF53383">
    <property type="entry name" value="PLP-dependent transferases"/>
    <property type="match status" value="1"/>
</dbReference>
<dbReference type="PROSITE" id="PS00096">
    <property type="entry name" value="SHMT"/>
    <property type="match status" value="1"/>
</dbReference>
<sequence>MYHRNILVEQTDPEIWAAIQAENARQEHHIELIASENYASPAVMAAQGSQLTNKYAEGYPGKRYYGGCEHVDVAEQLAIDRVKQIFGADAANVQPHCGASANEAVMLAFLKPGDTIMGMSLAEGGHLTHGMPLNMSGKWFNVVSYGLDANEAIDYDAMERKAHEHMPKLIIAGASAYSLRIDFERFAKVAKDVGAIFMVDIAHYAGLVAAGVYPNPVPHADVVTSTTHKSLRGPRGGIILMKSQHEKAINSAIFPGLQGGPLMHVIAAKAVAFKEAMSPEFKAYQQQVVKNAQIVADTLTERGLRIVSGRTESHVMLVDLRAKGITGKEAEAVLGSAHMTINKNAIPNDPEKPMVTSGVRIGTPAMTTRGFRDEEARITANLIADVLENPRDAANIDAVRAKVHALTSRFPVYR</sequence>
<proteinExistence type="inferred from homology"/>
<name>GLYA_VARPS</name>
<comment type="function">
    <text evidence="1">Catalyzes the reversible interconversion of serine and glycine with tetrahydrofolate (THF) serving as the one-carbon carrier. This reaction serves as the major source of one-carbon groups required for the biosynthesis of purines, thymidylate, methionine, and other important biomolecules. Also exhibits THF-independent aldolase activity toward beta-hydroxyamino acids, producing glycine and aldehydes, via a retro-aldol mechanism.</text>
</comment>
<comment type="catalytic activity">
    <reaction evidence="1">
        <text>(6R)-5,10-methylene-5,6,7,8-tetrahydrofolate + glycine + H2O = (6S)-5,6,7,8-tetrahydrofolate + L-serine</text>
        <dbReference type="Rhea" id="RHEA:15481"/>
        <dbReference type="ChEBI" id="CHEBI:15377"/>
        <dbReference type="ChEBI" id="CHEBI:15636"/>
        <dbReference type="ChEBI" id="CHEBI:33384"/>
        <dbReference type="ChEBI" id="CHEBI:57305"/>
        <dbReference type="ChEBI" id="CHEBI:57453"/>
        <dbReference type="EC" id="2.1.2.1"/>
    </reaction>
</comment>
<comment type="cofactor">
    <cofactor evidence="1">
        <name>pyridoxal 5'-phosphate</name>
        <dbReference type="ChEBI" id="CHEBI:597326"/>
    </cofactor>
</comment>
<comment type="pathway">
    <text evidence="1">One-carbon metabolism; tetrahydrofolate interconversion.</text>
</comment>
<comment type="pathway">
    <text evidence="1">Amino-acid biosynthesis; glycine biosynthesis; glycine from L-serine: step 1/1.</text>
</comment>
<comment type="subunit">
    <text evidence="1">Homodimer.</text>
</comment>
<comment type="subcellular location">
    <subcellularLocation>
        <location evidence="1">Cytoplasm</location>
    </subcellularLocation>
</comment>
<comment type="similarity">
    <text evidence="1">Belongs to the SHMT family.</text>
</comment>
<accession>C5CPY0</accession>
<organism>
    <name type="scientific">Variovorax paradoxus (strain S110)</name>
    <dbReference type="NCBI Taxonomy" id="543728"/>
    <lineage>
        <taxon>Bacteria</taxon>
        <taxon>Pseudomonadati</taxon>
        <taxon>Pseudomonadota</taxon>
        <taxon>Betaproteobacteria</taxon>
        <taxon>Burkholderiales</taxon>
        <taxon>Comamonadaceae</taxon>
        <taxon>Variovorax</taxon>
    </lineage>
</organism>
<evidence type="ECO:0000255" key="1">
    <source>
        <dbReference type="HAMAP-Rule" id="MF_00051"/>
    </source>
</evidence>
<reference key="1">
    <citation type="journal article" date="2011" name="J. Bacteriol.">
        <title>Complete genome sequence of the metabolically versatile plant growth-promoting endophyte, Variovorax paradoxus S110.</title>
        <authorList>
            <person name="Han J.I."/>
            <person name="Choi H.K."/>
            <person name="Lee S.W."/>
            <person name="Orwin P.M."/>
            <person name="Kim J."/>
            <person name="Laroe S.L."/>
            <person name="Kim T.G."/>
            <person name="O'Neil J."/>
            <person name="Leadbetter J.R."/>
            <person name="Lee S.Y."/>
            <person name="Hur C.G."/>
            <person name="Spain J.C."/>
            <person name="Ovchinnikova G."/>
            <person name="Goodwin L."/>
            <person name="Han C."/>
        </authorList>
    </citation>
    <scope>NUCLEOTIDE SEQUENCE [LARGE SCALE GENOMIC DNA]</scope>
    <source>
        <strain>S110</strain>
    </source>
</reference>
<keyword id="KW-0028">Amino-acid biosynthesis</keyword>
<keyword id="KW-0963">Cytoplasm</keyword>
<keyword id="KW-0554">One-carbon metabolism</keyword>
<keyword id="KW-0663">Pyridoxal phosphate</keyword>
<keyword id="KW-0808">Transferase</keyword>
<feature type="chain" id="PRO_1000202280" description="Serine hydroxymethyltransferase">
    <location>
        <begin position="1"/>
        <end position="414"/>
    </location>
</feature>
<feature type="binding site" evidence="1">
    <location>
        <position position="121"/>
    </location>
    <ligand>
        <name>(6S)-5,6,7,8-tetrahydrofolate</name>
        <dbReference type="ChEBI" id="CHEBI:57453"/>
    </ligand>
</feature>
<feature type="binding site" evidence="1">
    <location>
        <begin position="125"/>
        <end position="127"/>
    </location>
    <ligand>
        <name>(6S)-5,6,7,8-tetrahydrofolate</name>
        <dbReference type="ChEBI" id="CHEBI:57453"/>
    </ligand>
</feature>
<feature type="site" description="Plays an important role in substrate specificity" evidence="1">
    <location>
        <position position="228"/>
    </location>
</feature>
<feature type="modified residue" description="N6-(pyridoxal phosphate)lysine" evidence="1">
    <location>
        <position position="229"/>
    </location>
</feature>
<gene>
    <name evidence="1" type="primary">glyA</name>
    <name type="ordered locus">Vapar_3100</name>
</gene>
<protein>
    <recommendedName>
        <fullName evidence="1">Serine hydroxymethyltransferase</fullName>
        <shortName evidence="1">SHMT</shortName>
        <shortName evidence="1">Serine methylase</shortName>
        <ecNumber evidence="1">2.1.2.1</ecNumber>
    </recommendedName>
</protein>